<feature type="chain" id="PRO_1000212023" description="Succinate--CoA ligase [ADP-forming] subunit beta">
    <location>
        <begin position="1"/>
        <end position="386"/>
    </location>
</feature>
<feature type="domain" description="ATP-grasp" evidence="1">
    <location>
        <begin position="9"/>
        <end position="244"/>
    </location>
</feature>
<feature type="binding site" evidence="1">
    <location>
        <position position="46"/>
    </location>
    <ligand>
        <name>ATP</name>
        <dbReference type="ChEBI" id="CHEBI:30616"/>
    </ligand>
</feature>
<feature type="binding site" evidence="1">
    <location>
        <begin position="53"/>
        <end position="55"/>
    </location>
    <ligand>
        <name>ATP</name>
        <dbReference type="ChEBI" id="CHEBI:30616"/>
    </ligand>
</feature>
<feature type="binding site" evidence="1">
    <location>
        <position position="99"/>
    </location>
    <ligand>
        <name>ATP</name>
        <dbReference type="ChEBI" id="CHEBI:30616"/>
    </ligand>
</feature>
<feature type="binding site" evidence="1">
    <location>
        <position position="102"/>
    </location>
    <ligand>
        <name>ATP</name>
        <dbReference type="ChEBI" id="CHEBI:30616"/>
    </ligand>
</feature>
<feature type="binding site" evidence="1">
    <location>
        <position position="107"/>
    </location>
    <ligand>
        <name>ATP</name>
        <dbReference type="ChEBI" id="CHEBI:30616"/>
    </ligand>
</feature>
<feature type="binding site" evidence="1">
    <location>
        <position position="199"/>
    </location>
    <ligand>
        <name>Mg(2+)</name>
        <dbReference type="ChEBI" id="CHEBI:18420"/>
    </ligand>
</feature>
<feature type="binding site" evidence="1">
    <location>
        <position position="213"/>
    </location>
    <ligand>
        <name>Mg(2+)</name>
        <dbReference type="ChEBI" id="CHEBI:18420"/>
    </ligand>
</feature>
<feature type="binding site" evidence="1">
    <location>
        <position position="264"/>
    </location>
    <ligand>
        <name>substrate</name>
        <note>ligand shared with subunit alpha</note>
    </ligand>
</feature>
<feature type="binding site" evidence="1">
    <location>
        <begin position="321"/>
        <end position="323"/>
    </location>
    <ligand>
        <name>substrate</name>
        <note>ligand shared with subunit alpha</note>
    </ligand>
</feature>
<gene>
    <name evidence="1" type="primary">sucC</name>
    <name type="ordered locus">EAT1b_2902</name>
</gene>
<accession>C4L610</accession>
<comment type="function">
    <text evidence="1">Succinyl-CoA synthetase functions in the citric acid cycle (TCA), coupling the hydrolysis of succinyl-CoA to the synthesis of either ATP or GTP and thus represents the only step of substrate-level phosphorylation in the TCA. The beta subunit provides nucleotide specificity of the enzyme and binds the substrate succinate, while the binding sites for coenzyme A and phosphate are found in the alpha subunit.</text>
</comment>
<comment type="catalytic activity">
    <reaction evidence="1">
        <text>succinate + ATP + CoA = succinyl-CoA + ADP + phosphate</text>
        <dbReference type="Rhea" id="RHEA:17661"/>
        <dbReference type="ChEBI" id="CHEBI:30031"/>
        <dbReference type="ChEBI" id="CHEBI:30616"/>
        <dbReference type="ChEBI" id="CHEBI:43474"/>
        <dbReference type="ChEBI" id="CHEBI:57287"/>
        <dbReference type="ChEBI" id="CHEBI:57292"/>
        <dbReference type="ChEBI" id="CHEBI:456216"/>
        <dbReference type="EC" id="6.2.1.5"/>
    </reaction>
    <physiologicalReaction direction="right-to-left" evidence="1">
        <dbReference type="Rhea" id="RHEA:17663"/>
    </physiologicalReaction>
</comment>
<comment type="catalytic activity">
    <reaction evidence="1">
        <text>GTP + succinate + CoA = succinyl-CoA + GDP + phosphate</text>
        <dbReference type="Rhea" id="RHEA:22120"/>
        <dbReference type="ChEBI" id="CHEBI:30031"/>
        <dbReference type="ChEBI" id="CHEBI:37565"/>
        <dbReference type="ChEBI" id="CHEBI:43474"/>
        <dbReference type="ChEBI" id="CHEBI:57287"/>
        <dbReference type="ChEBI" id="CHEBI:57292"/>
        <dbReference type="ChEBI" id="CHEBI:58189"/>
    </reaction>
    <physiologicalReaction direction="right-to-left" evidence="1">
        <dbReference type="Rhea" id="RHEA:22122"/>
    </physiologicalReaction>
</comment>
<comment type="cofactor">
    <cofactor evidence="1">
        <name>Mg(2+)</name>
        <dbReference type="ChEBI" id="CHEBI:18420"/>
    </cofactor>
    <text evidence="1">Binds 1 Mg(2+) ion per subunit.</text>
</comment>
<comment type="pathway">
    <text evidence="1">Carbohydrate metabolism; tricarboxylic acid cycle; succinate from succinyl-CoA (ligase route): step 1/1.</text>
</comment>
<comment type="subunit">
    <text evidence="1">Heterotetramer of two alpha and two beta subunits.</text>
</comment>
<comment type="similarity">
    <text evidence="1">Belongs to the succinate/malate CoA ligase beta subunit family.</text>
</comment>
<dbReference type="EC" id="6.2.1.5" evidence="1"/>
<dbReference type="EMBL" id="CP001615">
    <property type="protein sequence ID" value="ACQ71816.1"/>
    <property type="molecule type" value="Genomic_DNA"/>
</dbReference>
<dbReference type="RefSeq" id="WP_015881375.1">
    <property type="nucleotide sequence ID" value="NC_012673.1"/>
</dbReference>
<dbReference type="SMR" id="C4L610"/>
<dbReference type="STRING" id="360911.EAT1b_2902"/>
<dbReference type="KEGG" id="eat:EAT1b_2902"/>
<dbReference type="eggNOG" id="COG0045">
    <property type="taxonomic scope" value="Bacteria"/>
</dbReference>
<dbReference type="HOGENOM" id="CLU_037430_0_2_9"/>
<dbReference type="OrthoDB" id="9802602at2"/>
<dbReference type="UniPathway" id="UPA00223">
    <property type="reaction ID" value="UER00999"/>
</dbReference>
<dbReference type="Proteomes" id="UP000000716">
    <property type="component" value="Chromosome"/>
</dbReference>
<dbReference type="GO" id="GO:0005829">
    <property type="term" value="C:cytosol"/>
    <property type="evidence" value="ECO:0007669"/>
    <property type="project" value="TreeGrafter"/>
</dbReference>
<dbReference type="GO" id="GO:0042709">
    <property type="term" value="C:succinate-CoA ligase complex"/>
    <property type="evidence" value="ECO:0007669"/>
    <property type="project" value="TreeGrafter"/>
</dbReference>
<dbReference type="GO" id="GO:0005524">
    <property type="term" value="F:ATP binding"/>
    <property type="evidence" value="ECO:0007669"/>
    <property type="project" value="UniProtKB-UniRule"/>
</dbReference>
<dbReference type="GO" id="GO:0000287">
    <property type="term" value="F:magnesium ion binding"/>
    <property type="evidence" value="ECO:0007669"/>
    <property type="project" value="UniProtKB-UniRule"/>
</dbReference>
<dbReference type="GO" id="GO:0004775">
    <property type="term" value="F:succinate-CoA ligase (ADP-forming) activity"/>
    <property type="evidence" value="ECO:0007669"/>
    <property type="project" value="UniProtKB-UniRule"/>
</dbReference>
<dbReference type="GO" id="GO:0004776">
    <property type="term" value="F:succinate-CoA ligase (GDP-forming) activity"/>
    <property type="evidence" value="ECO:0007669"/>
    <property type="project" value="RHEA"/>
</dbReference>
<dbReference type="GO" id="GO:0006104">
    <property type="term" value="P:succinyl-CoA metabolic process"/>
    <property type="evidence" value="ECO:0007669"/>
    <property type="project" value="TreeGrafter"/>
</dbReference>
<dbReference type="GO" id="GO:0006099">
    <property type="term" value="P:tricarboxylic acid cycle"/>
    <property type="evidence" value="ECO:0007669"/>
    <property type="project" value="UniProtKB-UniRule"/>
</dbReference>
<dbReference type="FunFam" id="3.30.1490.20:FF:000002">
    <property type="entry name" value="Succinate--CoA ligase [ADP-forming] subunit beta"/>
    <property type="match status" value="1"/>
</dbReference>
<dbReference type="FunFam" id="3.30.470.20:FF:000002">
    <property type="entry name" value="Succinate--CoA ligase [ADP-forming] subunit beta"/>
    <property type="match status" value="1"/>
</dbReference>
<dbReference type="FunFam" id="3.40.50.261:FF:000001">
    <property type="entry name" value="Succinate--CoA ligase [ADP-forming] subunit beta"/>
    <property type="match status" value="1"/>
</dbReference>
<dbReference type="Gene3D" id="3.30.1490.20">
    <property type="entry name" value="ATP-grasp fold, A domain"/>
    <property type="match status" value="1"/>
</dbReference>
<dbReference type="Gene3D" id="3.30.470.20">
    <property type="entry name" value="ATP-grasp fold, B domain"/>
    <property type="match status" value="1"/>
</dbReference>
<dbReference type="Gene3D" id="3.40.50.261">
    <property type="entry name" value="Succinyl-CoA synthetase domains"/>
    <property type="match status" value="1"/>
</dbReference>
<dbReference type="HAMAP" id="MF_00558">
    <property type="entry name" value="Succ_CoA_beta"/>
    <property type="match status" value="1"/>
</dbReference>
<dbReference type="InterPro" id="IPR011761">
    <property type="entry name" value="ATP-grasp"/>
</dbReference>
<dbReference type="InterPro" id="IPR013650">
    <property type="entry name" value="ATP-grasp_succ-CoA_synth-type"/>
</dbReference>
<dbReference type="InterPro" id="IPR013815">
    <property type="entry name" value="ATP_grasp_subdomain_1"/>
</dbReference>
<dbReference type="InterPro" id="IPR017866">
    <property type="entry name" value="Succ-CoA_synthase_bsu_CS"/>
</dbReference>
<dbReference type="InterPro" id="IPR005811">
    <property type="entry name" value="SUCC_ACL_C"/>
</dbReference>
<dbReference type="InterPro" id="IPR005809">
    <property type="entry name" value="Succ_CoA_ligase-like_bsu"/>
</dbReference>
<dbReference type="InterPro" id="IPR016102">
    <property type="entry name" value="Succinyl-CoA_synth-like"/>
</dbReference>
<dbReference type="NCBIfam" id="NF001913">
    <property type="entry name" value="PRK00696.1"/>
    <property type="match status" value="1"/>
</dbReference>
<dbReference type="NCBIfam" id="TIGR01016">
    <property type="entry name" value="sucCoAbeta"/>
    <property type="match status" value="1"/>
</dbReference>
<dbReference type="PANTHER" id="PTHR11815:SF10">
    <property type="entry name" value="SUCCINATE--COA LIGASE [GDP-FORMING] SUBUNIT BETA, MITOCHONDRIAL"/>
    <property type="match status" value="1"/>
</dbReference>
<dbReference type="PANTHER" id="PTHR11815">
    <property type="entry name" value="SUCCINYL-COA SYNTHETASE BETA CHAIN"/>
    <property type="match status" value="1"/>
</dbReference>
<dbReference type="Pfam" id="PF08442">
    <property type="entry name" value="ATP-grasp_2"/>
    <property type="match status" value="1"/>
</dbReference>
<dbReference type="Pfam" id="PF00549">
    <property type="entry name" value="Ligase_CoA"/>
    <property type="match status" value="1"/>
</dbReference>
<dbReference type="PIRSF" id="PIRSF001554">
    <property type="entry name" value="SucCS_beta"/>
    <property type="match status" value="1"/>
</dbReference>
<dbReference type="SUPFAM" id="SSF56059">
    <property type="entry name" value="Glutathione synthetase ATP-binding domain-like"/>
    <property type="match status" value="1"/>
</dbReference>
<dbReference type="SUPFAM" id="SSF52210">
    <property type="entry name" value="Succinyl-CoA synthetase domains"/>
    <property type="match status" value="1"/>
</dbReference>
<dbReference type="PROSITE" id="PS50975">
    <property type="entry name" value="ATP_GRASP"/>
    <property type="match status" value="1"/>
</dbReference>
<dbReference type="PROSITE" id="PS01217">
    <property type="entry name" value="SUCCINYL_COA_LIG_3"/>
    <property type="match status" value="1"/>
</dbReference>
<proteinExistence type="inferred from homology"/>
<reference key="1">
    <citation type="journal article" date="2011" name="J. Bacteriol.">
        <title>Complete genome sequence of the Thermophilic Bacterium Exiguobacterium sp. AT1b.</title>
        <authorList>
            <person name="Vishnivetskaya T.A."/>
            <person name="Lucas S."/>
            <person name="Copeland A."/>
            <person name="Lapidus A."/>
            <person name="Glavina del Rio T."/>
            <person name="Dalin E."/>
            <person name="Tice H."/>
            <person name="Bruce D.C."/>
            <person name="Goodwin L.A."/>
            <person name="Pitluck S."/>
            <person name="Saunders E."/>
            <person name="Brettin T."/>
            <person name="Detter C."/>
            <person name="Han C."/>
            <person name="Larimer F."/>
            <person name="Land M.L."/>
            <person name="Hauser L.J."/>
            <person name="Kyrpides N.C."/>
            <person name="Ovchinnikova G."/>
            <person name="Kathariou S."/>
            <person name="Ramaley R.F."/>
            <person name="Rodrigues D.F."/>
            <person name="Hendrix C."/>
            <person name="Richardson P."/>
            <person name="Tiedje J.M."/>
        </authorList>
    </citation>
    <scope>NUCLEOTIDE SEQUENCE [LARGE SCALE GENOMIC DNA]</scope>
    <source>
        <strain>ATCC BAA-1283 / AT1b</strain>
    </source>
</reference>
<sequence>MNIHEYQAKELLREFGVAVPTGYPAFTVEEAVAAAAKLDGEVKVVKAQIHAGGRGKAGGVKLAKTDEEVKQYASEILGKTLVTHQTGPEGKVVQRLYIEEGSAIDQEFYLGLVLDRSIGRIVIMGSSEGGMDIEEVAEHTPEKIHKEIVDPVVGLRPFQARRLAFKMEVPTKLVNEFSDMVMKLYKVYVETDCTIAEINPLVTTKDGNVIALDAKLNFDSNALYRHSDILALRDTTEEDPREVEASKHDLSYIALDGNIGCLVNGAGLAMATMDIIKHYGAEPANFLDVGGGATKEKVTEAFKLILSDDQVKGIFVNIFGGIMKCDIIAEGIVAATKEIGLDLPLVVRLEGTNVDAGKRILDESGLAITTANSMADGAEKIAALVR</sequence>
<name>SUCC_EXISA</name>
<organism>
    <name type="scientific">Exiguobacterium sp. (strain ATCC BAA-1283 / AT1b)</name>
    <dbReference type="NCBI Taxonomy" id="360911"/>
    <lineage>
        <taxon>Bacteria</taxon>
        <taxon>Bacillati</taxon>
        <taxon>Bacillota</taxon>
        <taxon>Bacilli</taxon>
        <taxon>Bacillales</taxon>
        <taxon>Bacillales Family XII. Incertae Sedis</taxon>
        <taxon>Exiguobacterium</taxon>
    </lineage>
</organism>
<evidence type="ECO:0000255" key="1">
    <source>
        <dbReference type="HAMAP-Rule" id="MF_00558"/>
    </source>
</evidence>
<protein>
    <recommendedName>
        <fullName evidence="1">Succinate--CoA ligase [ADP-forming] subunit beta</fullName>
        <ecNumber evidence="1">6.2.1.5</ecNumber>
    </recommendedName>
    <alternativeName>
        <fullName evidence="1">Succinyl-CoA synthetase subunit beta</fullName>
        <shortName evidence="1">SCS-beta</shortName>
    </alternativeName>
</protein>
<keyword id="KW-0067">ATP-binding</keyword>
<keyword id="KW-0436">Ligase</keyword>
<keyword id="KW-0460">Magnesium</keyword>
<keyword id="KW-0479">Metal-binding</keyword>
<keyword id="KW-0547">Nucleotide-binding</keyword>
<keyword id="KW-0816">Tricarboxylic acid cycle</keyword>